<gene>
    <name evidence="1" type="primary">gatA</name>
    <name type="ordered locus">Bind_1878</name>
</gene>
<protein>
    <recommendedName>
        <fullName evidence="1">Glutamyl-tRNA(Gln) amidotransferase subunit A</fullName>
        <shortName evidence="1">Glu-ADT subunit A</shortName>
        <ecNumber evidence="1">6.3.5.7</ecNumber>
    </recommendedName>
</protein>
<dbReference type="EC" id="6.3.5.7" evidence="1"/>
<dbReference type="EMBL" id="CP001016">
    <property type="protein sequence ID" value="ACB95502.1"/>
    <property type="molecule type" value="Genomic_DNA"/>
</dbReference>
<dbReference type="RefSeq" id="WP_012384859.1">
    <property type="nucleotide sequence ID" value="NC_010581.1"/>
</dbReference>
<dbReference type="SMR" id="B2IEA4"/>
<dbReference type="STRING" id="395963.Bind_1878"/>
<dbReference type="KEGG" id="bid:Bind_1878"/>
<dbReference type="eggNOG" id="COG0154">
    <property type="taxonomic scope" value="Bacteria"/>
</dbReference>
<dbReference type="HOGENOM" id="CLU_009600_0_3_5"/>
<dbReference type="OrthoDB" id="9811471at2"/>
<dbReference type="Proteomes" id="UP000001695">
    <property type="component" value="Chromosome"/>
</dbReference>
<dbReference type="GO" id="GO:0030956">
    <property type="term" value="C:glutamyl-tRNA(Gln) amidotransferase complex"/>
    <property type="evidence" value="ECO:0007669"/>
    <property type="project" value="InterPro"/>
</dbReference>
<dbReference type="GO" id="GO:0005524">
    <property type="term" value="F:ATP binding"/>
    <property type="evidence" value="ECO:0007669"/>
    <property type="project" value="UniProtKB-KW"/>
</dbReference>
<dbReference type="GO" id="GO:0050567">
    <property type="term" value="F:glutaminyl-tRNA synthase (glutamine-hydrolyzing) activity"/>
    <property type="evidence" value="ECO:0007669"/>
    <property type="project" value="UniProtKB-UniRule"/>
</dbReference>
<dbReference type="GO" id="GO:0006412">
    <property type="term" value="P:translation"/>
    <property type="evidence" value="ECO:0007669"/>
    <property type="project" value="UniProtKB-UniRule"/>
</dbReference>
<dbReference type="Gene3D" id="3.90.1300.10">
    <property type="entry name" value="Amidase signature (AS) domain"/>
    <property type="match status" value="1"/>
</dbReference>
<dbReference type="HAMAP" id="MF_00120">
    <property type="entry name" value="GatA"/>
    <property type="match status" value="1"/>
</dbReference>
<dbReference type="InterPro" id="IPR000120">
    <property type="entry name" value="Amidase"/>
</dbReference>
<dbReference type="InterPro" id="IPR020556">
    <property type="entry name" value="Amidase_CS"/>
</dbReference>
<dbReference type="InterPro" id="IPR023631">
    <property type="entry name" value="Amidase_dom"/>
</dbReference>
<dbReference type="InterPro" id="IPR036928">
    <property type="entry name" value="AS_sf"/>
</dbReference>
<dbReference type="InterPro" id="IPR004412">
    <property type="entry name" value="GatA"/>
</dbReference>
<dbReference type="NCBIfam" id="TIGR00132">
    <property type="entry name" value="gatA"/>
    <property type="match status" value="1"/>
</dbReference>
<dbReference type="PANTHER" id="PTHR11895:SF151">
    <property type="entry name" value="GLUTAMYL-TRNA(GLN) AMIDOTRANSFERASE SUBUNIT A"/>
    <property type="match status" value="1"/>
</dbReference>
<dbReference type="PANTHER" id="PTHR11895">
    <property type="entry name" value="TRANSAMIDASE"/>
    <property type="match status" value="1"/>
</dbReference>
<dbReference type="Pfam" id="PF01425">
    <property type="entry name" value="Amidase"/>
    <property type="match status" value="1"/>
</dbReference>
<dbReference type="SUPFAM" id="SSF75304">
    <property type="entry name" value="Amidase signature (AS) enzymes"/>
    <property type="match status" value="1"/>
</dbReference>
<dbReference type="PROSITE" id="PS00571">
    <property type="entry name" value="AMIDASES"/>
    <property type="match status" value="1"/>
</dbReference>
<reference key="1">
    <citation type="journal article" date="2010" name="J. Bacteriol.">
        <title>Complete genome sequence of Beijerinckia indica subsp. indica.</title>
        <authorList>
            <person name="Tamas I."/>
            <person name="Dedysh S.N."/>
            <person name="Liesack W."/>
            <person name="Stott M.B."/>
            <person name="Alam M."/>
            <person name="Murrell J.C."/>
            <person name="Dunfield P.F."/>
        </authorList>
    </citation>
    <scope>NUCLEOTIDE SEQUENCE [LARGE SCALE GENOMIC DNA]</scope>
    <source>
        <strain>ATCC 9039 / DSM 1715 / NCIMB 8712</strain>
    </source>
</reference>
<name>GATA_BEII9</name>
<evidence type="ECO:0000255" key="1">
    <source>
        <dbReference type="HAMAP-Rule" id="MF_00120"/>
    </source>
</evidence>
<sequence>MTELTDLSLADARDALRQKKISAAELAMAHIEAVEKARALNAFLLETPERAQAMARASDEKIARGEAGPLEGIPLGIKDLFCTEGVRTTAASHILENFVPAYESSITANLWRDGAVMLGKLNLDEFAMGSSNETSYFGPVVSPWRREGSTAPLTPGGSSGGSAAAVAARLCLGATATDTGGSIRQPAAFTGTVGIKPTYGRCSRWGVVAFASSLDQAGPITRTVRDAAILLRSMAGYDPKDTTSVNLPVPDYEAALGRSIKGMRIGIPKEYRLDAMPAEIGKLWDQGIEWMREAGAEPVEISLPHTRHALPAYYIVAPAEASSNLARYDGVRFGLRVPGKDIAGMYEETRAAGFGKEVRRRILIGTYVLSAGYYDAYYVRAQKIRTLIKRDFEQVFEQGIDAILTPATPSAAFGLGEKGAKDPIEMYLNDIFTVTVNMAGLPGIAVPAGVSAEGLPLGLQLIGRPFDEETLIALSGVIEAAAPRVSYPSSWWG</sequence>
<feature type="chain" id="PRO_1000095107" description="Glutamyl-tRNA(Gln) amidotransferase subunit A">
    <location>
        <begin position="1"/>
        <end position="493"/>
    </location>
</feature>
<feature type="active site" description="Charge relay system" evidence="1">
    <location>
        <position position="78"/>
    </location>
</feature>
<feature type="active site" description="Charge relay system" evidence="1">
    <location>
        <position position="158"/>
    </location>
</feature>
<feature type="active site" description="Acyl-ester intermediate" evidence="1">
    <location>
        <position position="182"/>
    </location>
</feature>
<comment type="function">
    <text evidence="1">Allows the formation of correctly charged Gln-tRNA(Gln) through the transamidation of misacylated Glu-tRNA(Gln) in organisms which lack glutaminyl-tRNA synthetase. The reaction takes place in the presence of glutamine and ATP through an activated gamma-phospho-Glu-tRNA(Gln).</text>
</comment>
<comment type="catalytic activity">
    <reaction evidence="1">
        <text>L-glutamyl-tRNA(Gln) + L-glutamine + ATP + H2O = L-glutaminyl-tRNA(Gln) + L-glutamate + ADP + phosphate + H(+)</text>
        <dbReference type="Rhea" id="RHEA:17521"/>
        <dbReference type="Rhea" id="RHEA-COMP:9681"/>
        <dbReference type="Rhea" id="RHEA-COMP:9684"/>
        <dbReference type="ChEBI" id="CHEBI:15377"/>
        <dbReference type="ChEBI" id="CHEBI:15378"/>
        <dbReference type="ChEBI" id="CHEBI:29985"/>
        <dbReference type="ChEBI" id="CHEBI:30616"/>
        <dbReference type="ChEBI" id="CHEBI:43474"/>
        <dbReference type="ChEBI" id="CHEBI:58359"/>
        <dbReference type="ChEBI" id="CHEBI:78520"/>
        <dbReference type="ChEBI" id="CHEBI:78521"/>
        <dbReference type="ChEBI" id="CHEBI:456216"/>
        <dbReference type="EC" id="6.3.5.7"/>
    </reaction>
</comment>
<comment type="subunit">
    <text evidence="1">Heterotrimer of A, B and C subunits.</text>
</comment>
<comment type="similarity">
    <text evidence="1">Belongs to the amidase family. GatA subfamily.</text>
</comment>
<accession>B2IEA4</accession>
<proteinExistence type="inferred from homology"/>
<keyword id="KW-0067">ATP-binding</keyword>
<keyword id="KW-0436">Ligase</keyword>
<keyword id="KW-0547">Nucleotide-binding</keyword>
<keyword id="KW-0648">Protein biosynthesis</keyword>
<keyword id="KW-1185">Reference proteome</keyword>
<organism>
    <name type="scientific">Beijerinckia indica subsp. indica (strain ATCC 9039 / DSM 1715 / NCIMB 8712)</name>
    <dbReference type="NCBI Taxonomy" id="395963"/>
    <lineage>
        <taxon>Bacteria</taxon>
        <taxon>Pseudomonadati</taxon>
        <taxon>Pseudomonadota</taxon>
        <taxon>Alphaproteobacteria</taxon>
        <taxon>Hyphomicrobiales</taxon>
        <taxon>Beijerinckiaceae</taxon>
        <taxon>Beijerinckia</taxon>
    </lineage>
</organism>